<organism>
    <name type="scientific">Synechococcus sp. (strain ATCC 27144 / PCC 6301 / SAUG 1402/1)</name>
    <name type="common">Anacystis nidulans</name>
    <dbReference type="NCBI Taxonomy" id="269084"/>
    <lineage>
        <taxon>Bacteria</taxon>
        <taxon>Bacillati</taxon>
        <taxon>Cyanobacteriota</taxon>
        <taxon>Cyanophyceae</taxon>
        <taxon>Synechococcales</taxon>
        <taxon>Synechococcaceae</taxon>
        <taxon>Synechococcus</taxon>
    </lineage>
</organism>
<feature type="chain" id="PRO_0000229087" description="1-(5-phosphoribosyl)-5-[(5-phosphoribosylamino)methylideneamino] imidazole-4-carboxamide isomerase">
    <location>
        <begin position="1"/>
        <end position="256"/>
    </location>
</feature>
<feature type="active site" description="Proton acceptor" evidence="1">
    <location>
        <position position="8"/>
    </location>
</feature>
<feature type="active site" description="Proton donor" evidence="1">
    <location>
        <position position="129"/>
    </location>
</feature>
<proteinExistence type="inferred from homology"/>
<comment type="catalytic activity">
    <reaction evidence="1">
        <text>1-(5-phospho-beta-D-ribosyl)-5-[(5-phospho-beta-D-ribosylamino)methylideneamino]imidazole-4-carboxamide = 5-[(5-phospho-1-deoxy-D-ribulos-1-ylimino)methylamino]-1-(5-phospho-beta-D-ribosyl)imidazole-4-carboxamide</text>
        <dbReference type="Rhea" id="RHEA:15469"/>
        <dbReference type="ChEBI" id="CHEBI:58435"/>
        <dbReference type="ChEBI" id="CHEBI:58525"/>
        <dbReference type="EC" id="5.3.1.16"/>
    </reaction>
</comment>
<comment type="pathway">
    <text evidence="1">Amino-acid biosynthesis; L-histidine biosynthesis; L-histidine from 5-phospho-alpha-D-ribose 1-diphosphate: step 4/9.</text>
</comment>
<comment type="subcellular location">
    <subcellularLocation>
        <location evidence="1">Cytoplasm</location>
    </subcellularLocation>
</comment>
<comment type="similarity">
    <text evidence="1">Belongs to the HisA/HisF family.</text>
</comment>
<keyword id="KW-0028">Amino-acid biosynthesis</keyword>
<keyword id="KW-0963">Cytoplasm</keyword>
<keyword id="KW-0368">Histidine biosynthesis</keyword>
<keyword id="KW-0413">Isomerase</keyword>
<protein>
    <recommendedName>
        <fullName evidence="1">1-(5-phosphoribosyl)-5-[(5-phosphoribosylamino)methylideneamino] imidazole-4-carboxamide isomerase</fullName>
        <ecNumber evidence="1">5.3.1.16</ecNumber>
    </recommendedName>
    <alternativeName>
        <fullName evidence="1">Phosphoribosylformimino-5-aminoimidazole carboxamide ribotide isomerase</fullName>
    </alternativeName>
</protein>
<dbReference type="EC" id="5.3.1.16" evidence="1"/>
<dbReference type="EMBL" id="AP008231">
    <property type="protein sequence ID" value="BAD80455.1"/>
    <property type="molecule type" value="Genomic_DNA"/>
</dbReference>
<dbReference type="RefSeq" id="WP_011244575.1">
    <property type="nucleotide sequence ID" value="NZ_CP085785.1"/>
</dbReference>
<dbReference type="SMR" id="Q5MZR5"/>
<dbReference type="GeneID" id="72430700"/>
<dbReference type="KEGG" id="syc:syc2265_c"/>
<dbReference type="eggNOG" id="COG0106">
    <property type="taxonomic scope" value="Bacteria"/>
</dbReference>
<dbReference type="UniPathway" id="UPA00031">
    <property type="reaction ID" value="UER00009"/>
</dbReference>
<dbReference type="Proteomes" id="UP000001175">
    <property type="component" value="Chromosome"/>
</dbReference>
<dbReference type="GO" id="GO:0005737">
    <property type="term" value="C:cytoplasm"/>
    <property type="evidence" value="ECO:0007669"/>
    <property type="project" value="UniProtKB-SubCell"/>
</dbReference>
<dbReference type="GO" id="GO:0003949">
    <property type="term" value="F:1-(5-phosphoribosyl)-5-[(5-phosphoribosylamino)methylideneamino]imidazole-4-carboxamide isomerase activity"/>
    <property type="evidence" value="ECO:0007669"/>
    <property type="project" value="UniProtKB-UniRule"/>
</dbReference>
<dbReference type="GO" id="GO:0000105">
    <property type="term" value="P:L-histidine biosynthetic process"/>
    <property type="evidence" value="ECO:0007669"/>
    <property type="project" value="UniProtKB-UniRule"/>
</dbReference>
<dbReference type="GO" id="GO:0000162">
    <property type="term" value="P:L-tryptophan biosynthetic process"/>
    <property type="evidence" value="ECO:0007669"/>
    <property type="project" value="TreeGrafter"/>
</dbReference>
<dbReference type="CDD" id="cd04732">
    <property type="entry name" value="HisA"/>
    <property type="match status" value="1"/>
</dbReference>
<dbReference type="FunFam" id="3.20.20.70:FF:000009">
    <property type="entry name" value="1-(5-phosphoribosyl)-5-[(5-phosphoribosylamino)methylideneamino] imidazole-4-carboxamide isomerase"/>
    <property type="match status" value="1"/>
</dbReference>
<dbReference type="Gene3D" id="3.20.20.70">
    <property type="entry name" value="Aldolase class I"/>
    <property type="match status" value="1"/>
</dbReference>
<dbReference type="HAMAP" id="MF_01014">
    <property type="entry name" value="HisA"/>
    <property type="match status" value="1"/>
</dbReference>
<dbReference type="InterPro" id="IPR013785">
    <property type="entry name" value="Aldolase_TIM"/>
</dbReference>
<dbReference type="InterPro" id="IPR006062">
    <property type="entry name" value="His_biosynth"/>
</dbReference>
<dbReference type="InterPro" id="IPR006063">
    <property type="entry name" value="HisA_bact_arch"/>
</dbReference>
<dbReference type="InterPro" id="IPR044524">
    <property type="entry name" value="Isoase_HisA-like"/>
</dbReference>
<dbReference type="InterPro" id="IPR023016">
    <property type="entry name" value="Isoase_HisA-like_bact"/>
</dbReference>
<dbReference type="InterPro" id="IPR011060">
    <property type="entry name" value="RibuloseP-bd_barrel"/>
</dbReference>
<dbReference type="NCBIfam" id="TIGR00007">
    <property type="entry name" value="1-(5-phosphoribosyl)-5-[(5-phosphoribosylamino)methylideneamino]imidazole-4-carboxamide isomerase"/>
    <property type="match status" value="1"/>
</dbReference>
<dbReference type="NCBIfam" id="NF010112">
    <property type="entry name" value="PRK13585.1"/>
    <property type="match status" value="1"/>
</dbReference>
<dbReference type="PANTHER" id="PTHR43090">
    <property type="entry name" value="1-(5-PHOSPHORIBOSYL)-5-[(5-PHOSPHORIBOSYLAMINO)METHYLIDENEAMINO] IMIDAZOLE-4-CARBOXAMIDE ISOMERASE"/>
    <property type="match status" value="1"/>
</dbReference>
<dbReference type="PANTHER" id="PTHR43090:SF2">
    <property type="entry name" value="1-(5-PHOSPHORIBOSYL)-5-[(5-PHOSPHORIBOSYLAMINO)METHYLIDENEAMINO] IMIDAZOLE-4-CARBOXAMIDE ISOMERASE"/>
    <property type="match status" value="1"/>
</dbReference>
<dbReference type="Pfam" id="PF00977">
    <property type="entry name" value="His_biosynth"/>
    <property type="match status" value="1"/>
</dbReference>
<dbReference type="SUPFAM" id="SSF51366">
    <property type="entry name" value="Ribulose-phoshate binding barrel"/>
    <property type="match status" value="1"/>
</dbReference>
<accession>Q5MZR5</accession>
<reference key="1">
    <citation type="journal article" date="2007" name="Photosyn. Res.">
        <title>Complete nucleotide sequence of the freshwater unicellular cyanobacterium Synechococcus elongatus PCC 6301 chromosome: gene content and organization.</title>
        <authorList>
            <person name="Sugita C."/>
            <person name="Ogata K."/>
            <person name="Shikata M."/>
            <person name="Jikuya H."/>
            <person name="Takano J."/>
            <person name="Furumichi M."/>
            <person name="Kanehisa M."/>
            <person name="Omata T."/>
            <person name="Sugiura M."/>
            <person name="Sugita M."/>
        </authorList>
    </citation>
    <scope>NUCLEOTIDE SEQUENCE [LARGE SCALE GENOMIC DNA]</scope>
    <source>
        <strain>ATCC 27144 / PCC 6301 / SAUG 1402/1</strain>
    </source>
</reference>
<name>HIS4_SYNP6</name>
<evidence type="ECO:0000255" key="1">
    <source>
        <dbReference type="HAMAP-Rule" id="MF_01014"/>
    </source>
</evidence>
<sequence>MDVIPAIDLLGGQCVRLFQGDYDQAEVYGKDPVGMALRWAEAGAQRLHLVDLDGAKEGSPVNAEAIATIAQRLSIPVQVGGGLRDRDTVARLLDSGVERAILGTVAVERPALVEALAGEFPGQIAVGIDARSGKVATRGWLEDSGLTAVALAQQMADLGACALICTDIGRDGTLQGPNLEELRAIAAAVSIPVIASGGVGSLTDLLSLLPLEAQGVSGVIVGKALYTGAVDLQEALRAIGSGRWQDVAVDDSSRLA</sequence>
<gene>
    <name evidence="1" type="primary">hisA</name>
    <name type="ordered locus">syc2265_c</name>
</gene>